<name>KCRM_CHICK</name>
<protein>
    <recommendedName>
        <fullName evidence="8 9">Creatine kinase M-type</fullName>
        <ecNumber evidence="7">2.7.3.2</ecNumber>
    </recommendedName>
    <alternativeName>
        <fullName>Creatine kinase M chain</fullName>
    </alternativeName>
    <alternativeName>
        <fullName>Creatine phosphokinase M-type</fullName>
        <shortName>CPK-M</shortName>
    </alternativeName>
    <alternativeName>
        <fullName>M-CK</fullName>
    </alternativeName>
</protein>
<proteinExistence type="evidence at protein level"/>
<organism>
    <name type="scientific">Gallus gallus</name>
    <name type="common">Chicken</name>
    <dbReference type="NCBI Taxonomy" id="9031"/>
    <lineage>
        <taxon>Eukaryota</taxon>
        <taxon>Metazoa</taxon>
        <taxon>Chordata</taxon>
        <taxon>Craniata</taxon>
        <taxon>Vertebrata</taxon>
        <taxon>Euteleostomi</taxon>
        <taxon>Archelosauria</taxon>
        <taxon>Archosauria</taxon>
        <taxon>Dinosauria</taxon>
        <taxon>Saurischia</taxon>
        <taxon>Theropoda</taxon>
        <taxon>Coelurosauria</taxon>
        <taxon>Aves</taxon>
        <taxon>Neognathae</taxon>
        <taxon>Galloanserae</taxon>
        <taxon>Galliformes</taxon>
        <taxon>Phasianidae</taxon>
        <taxon>Phasianinae</taxon>
        <taxon>Gallus</taxon>
    </lineage>
</organism>
<accession>P00565</accession>
<gene>
    <name evidence="9" type="primary">CKM</name>
</gene>
<comment type="function">
    <text evidence="7 10">Reversibly catalyzes the transfer of phosphate between ATP and various phosphogens (e.g. creatine phosphate) (PubMed:8525081). Creatine kinase isoenzymes play a central role in energy transduction in tissues with large, fluctuating energy demands, such as skeletal muscle, heart, brain and spermatozoa (Probable).</text>
</comment>
<comment type="catalytic activity">
    <reaction evidence="4 7">
        <text>creatine + ATP = N-phosphocreatine + ADP + H(+)</text>
        <dbReference type="Rhea" id="RHEA:17157"/>
        <dbReference type="ChEBI" id="CHEBI:15378"/>
        <dbReference type="ChEBI" id="CHEBI:30616"/>
        <dbReference type="ChEBI" id="CHEBI:57947"/>
        <dbReference type="ChEBI" id="CHEBI:58092"/>
        <dbReference type="ChEBI" id="CHEBI:456216"/>
        <dbReference type="EC" id="2.7.3.2"/>
    </reaction>
    <physiologicalReaction direction="left-to-right" evidence="7">
        <dbReference type="Rhea" id="RHEA:17158"/>
    </physiologicalReaction>
</comment>
<comment type="subunit">
    <text evidence="1">Dimer of identical or non-identical chains, which can be either B (brain type) or M (muscle type). With MM being the major form in skeletal muscle and myocardium, MB existing in myocardium, and BB existing in many tissues, especially brain.</text>
</comment>
<comment type="subcellular location">
    <subcellularLocation>
        <location>Cytoplasm</location>
    </subcellularLocation>
</comment>
<comment type="tissue specificity">
    <text evidence="6">Predominantly found in skeletal muscle, but not in the heart.</text>
</comment>
<comment type="similarity">
    <text evidence="2 3">Belongs to the ATP:guanido phosphotransferase family.</text>
</comment>
<feature type="chain" id="PRO_0000211980" description="Creatine kinase M-type">
    <location>
        <begin position="1"/>
        <end position="381"/>
    </location>
</feature>
<feature type="domain" description="Phosphagen kinase N-terminal" evidence="2">
    <location>
        <begin position="11"/>
        <end position="98"/>
    </location>
</feature>
<feature type="domain" description="Phosphagen kinase C-terminal" evidence="3">
    <location>
        <begin position="125"/>
        <end position="367"/>
    </location>
</feature>
<feature type="region of interest" description="Disordered" evidence="5">
    <location>
        <begin position="99"/>
        <end position="118"/>
    </location>
</feature>
<feature type="binding site" evidence="3">
    <location>
        <begin position="128"/>
        <end position="132"/>
    </location>
    <ligand>
        <name>ATP</name>
        <dbReference type="ChEBI" id="CHEBI:30616"/>
    </ligand>
</feature>
<feature type="binding site" evidence="3">
    <location>
        <position position="191"/>
    </location>
    <ligand>
        <name>ATP</name>
        <dbReference type="ChEBI" id="CHEBI:30616"/>
    </ligand>
</feature>
<feature type="binding site" evidence="3">
    <location>
        <position position="236"/>
    </location>
    <ligand>
        <name>ATP</name>
        <dbReference type="ChEBI" id="CHEBI:30616"/>
    </ligand>
</feature>
<feature type="binding site" evidence="3">
    <location>
        <position position="292"/>
    </location>
    <ligand>
        <name>ATP</name>
        <dbReference type="ChEBI" id="CHEBI:30616"/>
    </ligand>
</feature>
<feature type="binding site" evidence="3">
    <location>
        <begin position="320"/>
        <end position="325"/>
    </location>
    <ligand>
        <name>ATP</name>
        <dbReference type="ChEBI" id="CHEBI:30616"/>
    </ligand>
</feature>
<feature type="binding site" evidence="3">
    <location>
        <position position="335"/>
    </location>
    <ligand>
        <name>ATP</name>
        <dbReference type="ChEBI" id="CHEBI:30616"/>
    </ligand>
</feature>
<dbReference type="EC" id="2.7.3.2" evidence="7"/>
<dbReference type="EMBL" id="M10012">
    <property type="protein sequence ID" value="AAA48689.1"/>
    <property type="molecule type" value="mRNA"/>
</dbReference>
<dbReference type="EMBL" id="X00954">
    <property type="protein sequence ID" value="CAA25465.1"/>
    <property type="molecule type" value="mRNA"/>
</dbReference>
<dbReference type="EMBL" id="X00954">
    <property type="protein sequence ID" value="CAA25466.2"/>
    <property type="molecule type" value="mRNA"/>
</dbReference>
<dbReference type="PIR" id="A00675">
    <property type="entry name" value="KICHCM"/>
</dbReference>
<dbReference type="RefSeq" id="NP_990838.1">
    <property type="nucleotide sequence ID" value="NM_205507.1"/>
</dbReference>
<dbReference type="SMR" id="P00565"/>
<dbReference type="FunCoup" id="P00565">
    <property type="interactions" value="752"/>
</dbReference>
<dbReference type="iPTMnet" id="P00565"/>
<dbReference type="GeneID" id="107051134"/>
<dbReference type="VEuPathDB" id="HostDB:geneid_396248"/>
<dbReference type="InParanoid" id="P00565"/>
<dbReference type="PhylomeDB" id="P00565"/>
<dbReference type="PRO" id="PR:P00565"/>
<dbReference type="Proteomes" id="UP000000539">
    <property type="component" value="Unassembled WGS sequence"/>
</dbReference>
<dbReference type="GO" id="GO:0005829">
    <property type="term" value="C:cytosol"/>
    <property type="evidence" value="ECO:0000304"/>
    <property type="project" value="AgBase"/>
</dbReference>
<dbReference type="GO" id="GO:0005615">
    <property type="term" value="C:extracellular space"/>
    <property type="evidence" value="ECO:0000314"/>
    <property type="project" value="AgBase"/>
</dbReference>
<dbReference type="GO" id="GO:0005524">
    <property type="term" value="F:ATP binding"/>
    <property type="evidence" value="ECO:0007669"/>
    <property type="project" value="UniProtKB-KW"/>
</dbReference>
<dbReference type="GO" id="GO:0004111">
    <property type="term" value="F:creatine kinase activity"/>
    <property type="evidence" value="ECO:0000314"/>
    <property type="project" value="AgBase"/>
</dbReference>
<dbReference type="GO" id="GO:0046314">
    <property type="term" value="P:phosphocreatine biosynthetic process"/>
    <property type="evidence" value="ECO:0000318"/>
    <property type="project" value="GO_Central"/>
</dbReference>
<dbReference type="GO" id="GO:0009408">
    <property type="term" value="P:response to heat"/>
    <property type="evidence" value="ECO:0000314"/>
    <property type="project" value="AgBase"/>
</dbReference>
<dbReference type="CDD" id="cd00716">
    <property type="entry name" value="creatine_kinase_like"/>
    <property type="match status" value="1"/>
</dbReference>
<dbReference type="FunFam" id="3.30.590.10:FF:000026">
    <property type="entry name" value="Creatine kinase B-type"/>
    <property type="match status" value="1"/>
</dbReference>
<dbReference type="FunFam" id="1.10.135.10:FF:000001">
    <property type="entry name" value="Creatine kinase M-type"/>
    <property type="match status" value="1"/>
</dbReference>
<dbReference type="Gene3D" id="1.10.135.10">
    <property type="entry name" value="ATP:guanido phosphotransferase, N-terminal domain"/>
    <property type="match status" value="1"/>
</dbReference>
<dbReference type="Gene3D" id="3.30.590.10">
    <property type="entry name" value="Glutamine synthetase/guanido kinase, catalytic domain"/>
    <property type="match status" value="1"/>
</dbReference>
<dbReference type="InterPro" id="IPR000749">
    <property type="entry name" value="ATP-guanido_PTrfase"/>
</dbReference>
<dbReference type="InterPro" id="IPR022415">
    <property type="entry name" value="ATP-guanido_PTrfase_AS"/>
</dbReference>
<dbReference type="InterPro" id="IPR022414">
    <property type="entry name" value="ATP-guanido_PTrfase_cat"/>
</dbReference>
<dbReference type="InterPro" id="IPR022413">
    <property type="entry name" value="ATP-guanido_PTrfase_N"/>
</dbReference>
<dbReference type="InterPro" id="IPR036802">
    <property type="entry name" value="ATP-guanido_PTrfase_N_sf"/>
</dbReference>
<dbReference type="InterPro" id="IPR014746">
    <property type="entry name" value="Gln_synth/guanido_kin_cat_dom"/>
</dbReference>
<dbReference type="PANTHER" id="PTHR11547">
    <property type="entry name" value="ARGININE OR CREATINE KINASE"/>
    <property type="match status" value="1"/>
</dbReference>
<dbReference type="PANTHER" id="PTHR11547:SF63">
    <property type="entry name" value="CREATINE KINASE M-TYPE"/>
    <property type="match status" value="1"/>
</dbReference>
<dbReference type="Pfam" id="PF00217">
    <property type="entry name" value="ATP-gua_Ptrans"/>
    <property type="match status" value="1"/>
</dbReference>
<dbReference type="Pfam" id="PF02807">
    <property type="entry name" value="ATP-gua_PtransN"/>
    <property type="match status" value="1"/>
</dbReference>
<dbReference type="SUPFAM" id="SSF55931">
    <property type="entry name" value="Glutamine synthetase/guanido kinase"/>
    <property type="match status" value="1"/>
</dbReference>
<dbReference type="SUPFAM" id="SSF48034">
    <property type="entry name" value="Guanido kinase N-terminal domain"/>
    <property type="match status" value="1"/>
</dbReference>
<dbReference type="PROSITE" id="PS00112">
    <property type="entry name" value="PHOSPHAGEN_KINASE"/>
    <property type="match status" value="1"/>
</dbReference>
<dbReference type="PROSITE" id="PS51510">
    <property type="entry name" value="PHOSPHAGEN_KINASE_C"/>
    <property type="match status" value="1"/>
</dbReference>
<dbReference type="PROSITE" id="PS51509">
    <property type="entry name" value="PHOSPHAGEN_KINASE_N"/>
    <property type="match status" value="1"/>
</dbReference>
<reference key="1">
    <citation type="journal article" date="1984" name="Nucleic Acids Res.">
        <title>Molecular cloning and the complete nucleotide sequence of the creatine kinase-M cDNA from chicken.</title>
        <authorList>
            <person name="Kwiatkowski R.W."/>
            <person name="Schweinfest C.W."/>
            <person name="Dottin R.P."/>
        </authorList>
    </citation>
    <scope>NUCLEOTIDE SEQUENCE [MRNA]</scope>
    <scope>TISSUE SPECIFICITY</scope>
</reference>
<reference key="2">
    <citation type="journal article" date="1984" name="J. Biol. Chem.">
        <title>Complete cDNA-derived amino acid sequence of chick muscle creatine kinase.</title>
        <authorList>
            <person name="Ordahl C.P."/>
            <person name="Evans G.L."/>
            <person name="Cooper T.A."/>
            <person name="Kunz G."/>
            <person name="Perriard J.-C."/>
        </authorList>
    </citation>
    <scope>NUCLEOTIDE SEQUENCE [MRNA]</scope>
</reference>
<reference key="3">
    <citation type="journal article" date="1995" name="Res. Vet. Sci.">
        <title>Creatine kinase isoenzyme profiles in the plasma of the domestic fowl (Gallus domesticus): effects of acute heat stress.</title>
        <authorList>
            <person name="Mitchell M.A."/>
            <person name="Sandercock D.A."/>
        </authorList>
    </citation>
    <scope>FUNCTION</scope>
    <scope>CATALYTIC ACTIVITY</scope>
</reference>
<sequence>MPFSSTHNKHKLKFSAEEEFPDLSKHNNHMAKVLTPELYKRLRDKETPSGFTLDDVIQTGVDNPGHPFIMTVGCVAGDEESYEVFKDLFDPVIQDRHGGYKPTDKHRTDLNHENLKGGDDLDPKYVLSSRVRTGRSIKGYSLPPHCSRGERRAVEKLSVEALNSLEGEFKGRYYPLKAMTEQEQQQLIDDHFLFDKPVSPLLLASGMARDWPDARGIWHNDNKTFLVWVNEEDHLRVISMEKGGNMKEVFRRFCVGLKKIEEIFKKAGHPFMWTEHLGYILTCPSNLGTGLRGGVHVKLPKLSQHPKFEEILHRLRLQKRGTGGVDTAAVGAVFDISNADRLGFSEVEQVQMVVDGVKLMVEMEKKLEQNQPIDDMIPAQK</sequence>
<evidence type="ECO:0000250" key="1">
    <source>
        <dbReference type="UniProtKB" id="P12277"/>
    </source>
</evidence>
<evidence type="ECO:0000255" key="2">
    <source>
        <dbReference type="PROSITE-ProRule" id="PRU00842"/>
    </source>
</evidence>
<evidence type="ECO:0000255" key="3">
    <source>
        <dbReference type="PROSITE-ProRule" id="PRU00843"/>
    </source>
</evidence>
<evidence type="ECO:0000255" key="4">
    <source>
        <dbReference type="PROSITE-ProRule" id="PRU10029"/>
    </source>
</evidence>
<evidence type="ECO:0000256" key="5">
    <source>
        <dbReference type="SAM" id="MobiDB-lite"/>
    </source>
</evidence>
<evidence type="ECO:0000269" key="6">
    <source>
    </source>
</evidence>
<evidence type="ECO:0000269" key="7">
    <source>
    </source>
</evidence>
<evidence type="ECO:0000303" key="8">
    <source>
    </source>
</evidence>
<evidence type="ECO:0000303" key="9">
    <source>
    </source>
</evidence>
<evidence type="ECO:0000305" key="10"/>
<keyword id="KW-0067">ATP-binding</keyword>
<keyword id="KW-0963">Cytoplasm</keyword>
<keyword id="KW-0418">Kinase</keyword>
<keyword id="KW-0547">Nucleotide-binding</keyword>
<keyword id="KW-1185">Reference proteome</keyword>
<keyword id="KW-0808">Transferase</keyword>